<dbReference type="EMBL" id="CP001396">
    <property type="protein sequence ID" value="ACR65291.1"/>
    <property type="molecule type" value="Genomic_DNA"/>
</dbReference>
<dbReference type="RefSeq" id="WP_000610901.1">
    <property type="nucleotide sequence ID" value="NC_012759.1"/>
</dbReference>
<dbReference type="SMR" id="C4ZPX6"/>
<dbReference type="GeneID" id="93777385"/>
<dbReference type="KEGG" id="ebw:BWG_0048"/>
<dbReference type="HOGENOM" id="CLU_128074_0_0_6"/>
<dbReference type="GO" id="GO:0070987">
    <property type="term" value="P:error-free translesion synthesis"/>
    <property type="evidence" value="ECO:0007669"/>
    <property type="project" value="TreeGrafter"/>
</dbReference>
<dbReference type="Gene3D" id="2.60.40.1470">
    <property type="entry name" value="ApaG domain"/>
    <property type="match status" value="1"/>
</dbReference>
<dbReference type="HAMAP" id="MF_00791">
    <property type="entry name" value="ApaG"/>
    <property type="match status" value="1"/>
</dbReference>
<dbReference type="InterPro" id="IPR007474">
    <property type="entry name" value="ApaG_domain"/>
</dbReference>
<dbReference type="InterPro" id="IPR036767">
    <property type="entry name" value="ApaG_sf"/>
</dbReference>
<dbReference type="InterPro" id="IPR023065">
    <property type="entry name" value="Uncharacterised_ApaG"/>
</dbReference>
<dbReference type="NCBIfam" id="NF003967">
    <property type="entry name" value="PRK05461.1"/>
    <property type="match status" value="1"/>
</dbReference>
<dbReference type="PANTHER" id="PTHR14289">
    <property type="entry name" value="F-BOX ONLY PROTEIN 3"/>
    <property type="match status" value="1"/>
</dbReference>
<dbReference type="PANTHER" id="PTHR14289:SF16">
    <property type="entry name" value="POLYMERASE DELTA-INTERACTING PROTEIN 2"/>
    <property type="match status" value="1"/>
</dbReference>
<dbReference type="Pfam" id="PF04379">
    <property type="entry name" value="DUF525"/>
    <property type="match status" value="1"/>
</dbReference>
<dbReference type="SUPFAM" id="SSF110069">
    <property type="entry name" value="ApaG-like"/>
    <property type="match status" value="1"/>
</dbReference>
<dbReference type="PROSITE" id="PS51087">
    <property type="entry name" value="APAG"/>
    <property type="match status" value="1"/>
</dbReference>
<name>APAG_ECOBW</name>
<feature type="chain" id="PRO_1000212957" description="Protein ApaG">
    <location>
        <begin position="1"/>
        <end position="125"/>
    </location>
</feature>
<feature type="domain" description="ApaG" evidence="1">
    <location>
        <begin position="1"/>
        <end position="125"/>
    </location>
</feature>
<organism>
    <name type="scientific">Escherichia coli (strain K12 / MC4100 / BW2952)</name>
    <dbReference type="NCBI Taxonomy" id="595496"/>
    <lineage>
        <taxon>Bacteria</taxon>
        <taxon>Pseudomonadati</taxon>
        <taxon>Pseudomonadota</taxon>
        <taxon>Gammaproteobacteria</taxon>
        <taxon>Enterobacterales</taxon>
        <taxon>Enterobacteriaceae</taxon>
        <taxon>Escherichia</taxon>
    </lineage>
</organism>
<protein>
    <recommendedName>
        <fullName evidence="1">Protein ApaG</fullName>
    </recommendedName>
</protein>
<proteinExistence type="inferred from homology"/>
<accession>C4ZPX6</accession>
<gene>
    <name evidence="1" type="primary">apaG</name>
    <name type="ordered locus">BWG_0048</name>
</gene>
<evidence type="ECO:0000255" key="1">
    <source>
        <dbReference type="HAMAP-Rule" id="MF_00791"/>
    </source>
</evidence>
<reference key="1">
    <citation type="journal article" date="2009" name="J. Bacteriol.">
        <title>Genomic sequencing reveals regulatory mutations and recombinational events in the widely used MC4100 lineage of Escherichia coli K-12.</title>
        <authorList>
            <person name="Ferenci T."/>
            <person name="Zhou Z."/>
            <person name="Betteridge T."/>
            <person name="Ren Y."/>
            <person name="Liu Y."/>
            <person name="Feng L."/>
            <person name="Reeves P.R."/>
            <person name="Wang L."/>
        </authorList>
    </citation>
    <scope>NUCLEOTIDE SEQUENCE [LARGE SCALE GENOMIC DNA]</scope>
    <source>
        <strain>K12 / MC4100 / BW2952</strain>
    </source>
</reference>
<sequence>MINSPRVCIQVQSVYIEAQSSPDNERYVFAYTVTIRNLGRAPVQLLGRYWLITNGNGRETEVQGEGVVGVQPLIAPGEEYQYTSGAIIETPLGTMQGHYEMIDENGVPFSIDIPVFRLAVPTLIH</sequence>